<gene>
    <name evidence="1" type="primary">menD</name>
    <name type="ordered locus">SbBS512_E2643</name>
</gene>
<feature type="chain" id="PRO_1000187097" description="2-succinyl-5-enolpyruvyl-6-hydroxy-3-cyclohexene-1-carboxylate synthase">
    <location>
        <begin position="1"/>
        <end position="556"/>
    </location>
</feature>
<proteinExistence type="inferred from homology"/>
<name>MEND_SHIB3</name>
<organism>
    <name type="scientific">Shigella boydii serotype 18 (strain CDC 3083-94 / BS512)</name>
    <dbReference type="NCBI Taxonomy" id="344609"/>
    <lineage>
        <taxon>Bacteria</taxon>
        <taxon>Pseudomonadati</taxon>
        <taxon>Pseudomonadota</taxon>
        <taxon>Gammaproteobacteria</taxon>
        <taxon>Enterobacterales</taxon>
        <taxon>Enterobacteriaceae</taxon>
        <taxon>Shigella</taxon>
    </lineage>
</organism>
<protein>
    <recommendedName>
        <fullName evidence="1">2-succinyl-5-enolpyruvyl-6-hydroxy-3-cyclohexene-1-carboxylate synthase</fullName>
        <shortName evidence="1">SEPHCHC synthase</shortName>
        <ecNumber evidence="1">2.2.1.9</ecNumber>
    </recommendedName>
    <alternativeName>
        <fullName evidence="1">Menaquinone biosynthesis protein MenD</fullName>
    </alternativeName>
</protein>
<dbReference type="EC" id="2.2.1.9" evidence="1"/>
<dbReference type="EMBL" id="CP001063">
    <property type="protein sequence ID" value="ACD07256.1"/>
    <property type="molecule type" value="Genomic_DNA"/>
</dbReference>
<dbReference type="RefSeq" id="WP_012421328.1">
    <property type="nucleotide sequence ID" value="NC_010658.1"/>
</dbReference>
<dbReference type="SMR" id="B2TW50"/>
<dbReference type="STRING" id="344609.SbBS512_E2643"/>
<dbReference type="KEGG" id="sbc:SbBS512_E2643"/>
<dbReference type="HOGENOM" id="CLU_006051_3_0_6"/>
<dbReference type="UniPathway" id="UPA00079"/>
<dbReference type="UniPathway" id="UPA01057">
    <property type="reaction ID" value="UER00164"/>
</dbReference>
<dbReference type="Proteomes" id="UP000001030">
    <property type="component" value="Chromosome"/>
</dbReference>
<dbReference type="GO" id="GO:0070204">
    <property type="term" value="F:2-succinyl-5-enolpyruvyl-6-hydroxy-3-cyclohexene-1-carboxylic-acid synthase activity"/>
    <property type="evidence" value="ECO:0007669"/>
    <property type="project" value="UniProtKB-UniRule"/>
</dbReference>
<dbReference type="GO" id="GO:0000287">
    <property type="term" value="F:magnesium ion binding"/>
    <property type="evidence" value="ECO:0007669"/>
    <property type="project" value="UniProtKB-UniRule"/>
</dbReference>
<dbReference type="GO" id="GO:0030145">
    <property type="term" value="F:manganese ion binding"/>
    <property type="evidence" value="ECO:0007669"/>
    <property type="project" value="UniProtKB-UniRule"/>
</dbReference>
<dbReference type="GO" id="GO:0030976">
    <property type="term" value="F:thiamine pyrophosphate binding"/>
    <property type="evidence" value="ECO:0007669"/>
    <property type="project" value="UniProtKB-UniRule"/>
</dbReference>
<dbReference type="GO" id="GO:0009234">
    <property type="term" value="P:menaquinone biosynthetic process"/>
    <property type="evidence" value="ECO:0007669"/>
    <property type="project" value="UniProtKB-UniRule"/>
</dbReference>
<dbReference type="CDD" id="cd07037">
    <property type="entry name" value="TPP_PYR_MenD"/>
    <property type="match status" value="1"/>
</dbReference>
<dbReference type="CDD" id="cd02009">
    <property type="entry name" value="TPP_SHCHC_synthase"/>
    <property type="match status" value="1"/>
</dbReference>
<dbReference type="FunFam" id="3.40.50.1220:FF:000010">
    <property type="entry name" value="2-succinyl-5-enolpyruvyl-6-hydroxy-3-cyclohexene-1-carboxylate synthase"/>
    <property type="match status" value="1"/>
</dbReference>
<dbReference type="FunFam" id="3.40.50.970:FF:000029">
    <property type="entry name" value="2-succinyl-5-enolpyruvyl-6-hydroxy-3-cyclohexene-1-carboxylate synthase"/>
    <property type="match status" value="1"/>
</dbReference>
<dbReference type="Gene3D" id="3.40.50.970">
    <property type="match status" value="2"/>
</dbReference>
<dbReference type="Gene3D" id="3.40.50.1220">
    <property type="entry name" value="TPP-binding domain"/>
    <property type="match status" value="1"/>
</dbReference>
<dbReference type="HAMAP" id="MF_01659">
    <property type="entry name" value="MenD"/>
    <property type="match status" value="1"/>
</dbReference>
<dbReference type="InterPro" id="IPR004433">
    <property type="entry name" value="MenaQ_synth_MenD"/>
</dbReference>
<dbReference type="InterPro" id="IPR032264">
    <property type="entry name" value="MenD_middle"/>
</dbReference>
<dbReference type="InterPro" id="IPR029061">
    <property type="entry name" value="THDP-binding"/>
</dbReference>
<dbReference type="InterPro" id="IPR012001">
    <property type="entry name" value="Thiamin_PyroP_enz_TPP-bd_dom"/>
</dbReference>
<dbReference type="InterPro" id="IPR011766">
    <property type="entry name" value="TPP_enzyme_TPP-bd"/>
</dbReference>
<dbReference type="NCBIfam" id="TIGR00173">
    <property type="entry name" value="menD"/>
    <property type="match status" value="1"/>
</dbReference>
<dbReference type="PANTHER" id="PTHR42916">
    <property type="entry name" value="2-SUCCINYL-5-ENOLPYRUVYL-6-HYDROXY-3-CYCLOHEXENE-1-CARBOXYLATE SYNTHASE"/>
    <property type="match status" value="1"/>
</dbReference>
<dbReference type="PANTHER" id="PTHR42916:SF1">
    <property type="entry name" value="PROTEIN PHYLLO, CHLOROPLASTIC"/>
    <property type="match status" value="1"/>
</dbReference>
<dbReference type="Pfam" id="PF02775">
    <property type="entry name" value="TPP_enzyme_C"/>
    <property type="match status" value="1"/>
</dbReference>
<dbReference type="Pfam" id="PF16582">
    <property type="entry name" value="TPP_enzyme_M_2"/>
    <property type="match status" value="1"/>
</dbReference>
<dbReference type="Pfam" id="PF02776">
    <property type="entry name" value="TPP_enzyme_N"/>
    <property type="match status" value="1"/>
</dbReference>
<dbReference type="PIRSF" id="PIRSF004983">
    <property type="entry name" value="MenD"/>
    <property type="match status" value="1"/>
</dbReference>
<dbReference type="SUPFAM" id="SSF52518">
    <property type="entry name" value="Thiamin diphosphate-binding fold (THDP-binding)"/>
    <property type="match status" value="2"/>
</dbReference>
<accession>B2TW50</accession>
<keyword id="KW-0460">Magnesium</keyword>
<keyword id="KW-0464">Manganese</keyword>
<keyword id="KW-0474">Menaquinone biosynthesis</keyword>
<keyword id="KW-0479">Metal-binding</keyword>
<keyword id="KW-1185">Reference proteome</keyword>
<keyword id="KW-0786">Thiamine pyrophosphate</keyword>
<keyword id="KW-0808">Transferase</keyword>
<reference key="1">
    <citation type="submission" date="2008-05" db="EMBL/GenBank/DDBJ databases">
        <title>Complete sequence of Shigella boydii serotype 18 strain BS512.</title>
        <authorList>
            <person name="Rasko D.A."/>
            <person name="Rosovitz M."/>
            <person name="Maurelli A.T."/>
            <person name="Myers G."/>
            <person name="Seshadri R."/>
            <person name="Cer R."/>
            <person name="Jiang L."/>
            <person name="Ravel J."/>
            <person name="Sebastian Y."/>
        </authorList>
    </citation>
    <scope>NUCLEOTIDE SEQUENCE [LARGE SCALE GENOMIC DNA]</scope>
    <source>
        <strain>CDC 3083-94 / BS512</strain>
    </source>
</reference>
<evidence type="ECO:0000255" key="1">
    <source>
        <dbReference type="HAMAP-Rule" id="MF_01659"/>
    </source>
</evidence>
<sequence>MSVSAFNRRWAAVILEALTRHGVRHICIAPGSRSTPLTLAAAENSAFIHHTHFDERGLGHLALGLAKVSKQPVAVIVTSGTAVANLYPALIEAGLTGEKLILLTADRPPELIDCGANQAIRQPGMFASHPTHSISLPRPTQDIPARWLVSTIDHALGTLHAGGVHINCPFAEPLYGEMDDTGLSWQQRLGDWWQDDKPWLREAPSLESEKQRDWFFWRQKRGVVVAGRMSAEEGKKVALWAQTLGWPLIGDVLSQTGQPLPCADLWLGNAKATSELQQAQIVVQLGSSLTGKRLLQWQASCEPEEYWIVDDIEGRLDPAHHRGRRLIANIADWLELHPAEKRQPWCVEIPRLAEQAMQAVIARRDAFGEAQLAHRISDYLPEQGQLFVGNSLVVRLIDALSQLPAGYPVYSNRGASGIDGLLSTAAGVQRASGKPTLAIVGDLSALYDLNALALLRQVSAPLVLIVVNNNGGQIFSLLPTPQSERERFYLMPQNVHFEHAAAMFELKYHRPQNWQELETAFADAWRTPTTTVIEMVVNDTDGAQTLQQLQAQVSHL</sequence>
<comment type="function">
    <text evidence="1">Catalyzes the thiamine diphosphate-dependent decarboxylation of 2-oxoglutarate and the subsequent addition of the resulting succinic semialdehyde-thiamine pyrophosphate anion to isochorismate to yield 2-succinyl-5-enolpyruvyl-6-hydroxy-3-cyclohexene-1-carboxylate (SEPHCHC).</text>
</comment>
<comment type="catalytic activity">
    <reaction evidence="1">
        <text>isochorismate + 2-oxoglutarate + H(+) = 5-enolpyruvoyl-6-hydroxy-2-succinyl-cyclohex-3-ene-1-carboxylate + CO2</text>
        <dbReference type="Rhea" id="RHEA:25593"/>
        <dbReference type="ChEBI" id="CHEBI:15378"/>
        <dbReference type="ChEBI" id="CHEBI:16526"/>
        <dbReference type="ChEBI" id="CHEBI:16810"/>
        <dbReference type="ChEBI" id="CHEBI:29780"/>
        <dbReference type="ChEBI" id="CHEBI:58818"/>
        <dbReference type="EC" id="2.2.1.9"/>
    </reaction>
</comment>
<comment type="cofactor">
    <cofactor evidence="1">
        <name>Mg(2+)</name>
        <dbReference type="ChEBI" id="CHEBI:18420"/>
    </cofactor>
    <cofactor evidence="1">
        <name>Mn(2+)</name>
        <dbReference type="ChEBI" id="CHEBI:29035"/>
    </cofactor>
</comment>
<comment type="cofactor">
    <cofactor evidence="1">
        <name>thiamine diphosphate</name>
        <dbReference type="ChEBI" id="CHEBI:58937"/>
    </cofactor>
    <text evidence="1">Binds 1 thiamine pyrophosphate per subunit.</text>
</comment>
<comment type="pathway">
    <text evidence="1">Quinol/quinone metabolism; 1,4-dihydroxy-2-naphthoate biosynthesis; 1,4-dihydroxy-2-naphthoate from chorismate: step 2/7.</text>
</comment>
<comment type="pathway">
    <text evidence="1">Quinol/quinone metabolism; menaquinone biosynthesis.</text>
</comment>
<comment type="subunit">
    <text evidence="1">Homodimer.</text>
</comment>
<comment type="similarity">
    <text evidence="1">Belongs to the TPP enzyme family. MenD subfamily.</text>
</comment>